<proteinExistence type="evidence at transcript level"/>
<dbReference type="EMBL" id="BC055128">
    <property type="protein sequence ID" value="AAH55128.1"/>
    <property type="molecule type" value="mRNA"/>
</dbReference>
<dbReference type="RefSeq" id="NP_956194.1">
    <property type="nucleotide sequence ID" value="NM_199900.1"/>
</dbReference>
<dbReference type="SMR" id="Q7SY48"/>
<dbReference type="FunCoup" id="Q7SY48">
    <property type="interactions" value="2292"/>
</dbReference>
<dbReference type="STRING" id="7955.ENSDARP00000131597"/>
<dbReference type="PaxDb" id="7955-ENSDARP00000066445"/>
<dbReference type="GeneID" id="334446"/>
<dbReference type="KEGG" id="dre:334446"/>
<dbReference type="AGR" id="ZFIN:ZDB-GENE-030131-6378"/>
<dbReference type="CTD" id="55127"/>
<dbReference type="ZFIN" id="ZDB-GENE-030131-6378">
    <property type="gene designation" value="heatr1"/>
</dbReference>
<dbReference type="eggNOG" id="KOG1837">
    <property type="taxonomic scope" value="Eukaryota"/>
</dbReference>
<dbReference type="InParanoid" id="Q7SY48"/>
<dbReference type="OrthoDB" id="31183at2759"/>
<dbReference type="PhylomeDB" id="Q7SY48"/>
<dbReference type="PRO" id="PR:Q7SY48"/>
<dbReference type="Proteomes" id="UP000000437">
    <property type="component" value="Alternate scaffold 12"/>
</dbReference>
<dbReference type="Proteomes" id="UP000000437">
    <property type="component" value="Chromosome 12"/>
</dbReference>
<dbReference type="GO" id="GO:0030686">
    <property type="term" value="C:90S preribosome"/>
    <property type="evidence" value="ECO:0000318"/>
    <property type="project" value="GO_Central"/>
</dbReference>
<dbReference type="GO" id="GO:0005730">
    <property type="term" value="C:nucleolus"/>
    <property type="evidence" value="ECO:0000250"/>
    <property type="project" value="UniProtKB"/>
</dbReference>
<dbReference type="GO" id="GO:0032040">
    <property type="term" value="C:small-subunit processome"/>
    <property type="evidence" value="ECO:0000250"/>
    <property type="project" value="UniProtKB"/>
</dbReference>
<dbReference type="GO" id="GO:0034455">
    <property type="term" value="C:t-UTP complex"/>
    <property type="evidence" value="ECO:0000318"/>
    <property type="project" value="GO_Central"/>
</dbReference>
<dbReference type="GO" id="GO:0030515">
    <property type="term" value="F:snoRNA binding"/>
    <property type="evidence" value="ECO:0000318"/>
    <property type="project" value="GO_Central"/>
</dbReference>
<dbReference type="GO" id="GO:0000462">
    <property type="term" value="P:maturation of SSU-rRNA from tricistronic rRNA transcript (SSU-rRNA, 5.8S rRNA, LSU-rRNA)"/>
    <property type="evidence" value="ECO:0000315"/>
    <property type="project" value="ZFIN"/>
</dbReference>
<dbReference type="GO" id="GO:0043066">
    <property type="term" value="P:negative regulation of apoptotic process"/>
    <property type="evidence" value="ECO:0000315"/>
    <property type="project" value="ZFIN"/>
</dbReference>
<dbReference type="GO" id="GO:0061351">
    <property type="term" value="P:neural precursor cell proliferation"/>
    <property type="evidence" value="ECO:0000250"/>
    <property type="project" value="UniProtKB"/>
</dbReference>
<dbReference type="GO" id="GO:0045943">
    <property type="term" value="P:positive regulation of transcription by RNA polymerase I"/>
    <property type="evidence" value="ECO:0000318"/>
    <property type="project" value="GO_Central"/>
</dbReference>
<dbReference type="GO" id="GO:1902570">
    <property type="term" value="P:protein localization to nucleolus"/>
    <property type="evidence" value="ECO:0000250"/>
    <property type="project" value="UniProtKB"/>
</dbReference>
<dbReference type="GO" id="GO:0043487">
    <property type="term" value="P:regulation of RNA stability"/>
    <property type="evidence" value="ECO:0000315"/>
    <property type="project" value="ZFIN"/>
</dbReference>
<dbReference type="GO" id="GO:0042274">
    <property type="term" value="P:ribosomal small subunit biogenesis"/>
    <property type="evidence" value="ECO:0000250"/>
    <property type="project" value="UniProtKB"/>
</dbReference>
<dbReference type="GO" id="GO:0016072">
    <property type="term" value="P:rRNA metabolic process"/>
    <property type="evidence" value="ECO:0000250"/>
    <property type="project" value="UniProtKB"/>
</dbReference>
<dbReference type="FunFam" id="1.25.10.10:FF:001285">
    <property type="entry name" value="HEAT repeat containing 1"/>
    <property type="match status" value="1"/>
</dbReference>
<dbReference type="Gene3D" id="1.25.10.10">
    <property type="entry name" value="Leucine-rich Repeat Variant"/>
    <property type="match status" value="2"/>
</dbReference>
<dbReference type="InterPro" id="IPR011989">
    <property type="entry name" value="ARM-like"/>
</dbReference>
<dbReference type="InterPro" id="IPR016024">
    <property type="entry name" value="ARM-type_fold"/>
</dbReference>
<dbReference type="InterPro" id="IPR012954">
    <property type="entry name" value="BP28_C_dom"/>
</dbReference>
<dbReference type="InterPro" id="IPR056473">
    <property type="entry name" value="HEAT_Utp10/HEAT1"/>
</dbReference>
<dbReference type="InterPro" id="IPR022125">
    <property type="entry name" value="U3snoRNP10_N"/>
</dbReference>
<dbReference type="InterPro" id="IPR040191">
    <property type="entry name" value="UTP10"/>
</dbReference>
<dbReference type="PANTHER" id="PTHR13457">
    <property type="entry name" value="BAP28"/>
    <property type="match status" value="1"/>
</dbReference>
<dbReference type="PANTHER" id="PTHR13457:SF1">
    <property type="entry name" value="HEAT REPEAT-CONTAINING PROTEIN 1"/>
    <property type="match status" value="1"/>
</dbReference>
<dbReference type="Pfam" id="PF08146">
    <property type="entry name" value="BP28CT"/>
    <property type="match status" value="1"/>
</dbReference>
<dbReference type="Pfam" id="PF23243">
    <property type="entry name" value="HEAT_HEATR1"/>
    <property type="match status" value="1"/>
</dbReference>
<dbReference type="Pfam" id="PF12397">
    <property type="entry name" value="U3snoRNP10"/>
    <property type="match status" value="1"/>
</dbReference>
<dbReference type="SMART" id="SM01036">
    <property type="entry name" value="BP28CT"/>
    <property type="match status" value="1"/>
</dbReference>
<dbReference type="SUPFAM" id="SSF48371">
    <property type="entry name" value="ARM repeat"/>
    <property type="match status" value="3"/>
</dbReference>
<comment type="function">
    <text evidence="1 3">Ribosome biogenesis factor; required for recruitment of Myc to nucleoli (By similarity). Involved in nucleolar processing of pre-18S ribosomal RNA. Required for optimal pre-ribosomal RNA transcription by RNA polymerase I (By similarity). Part of the small subunit (SSU) processome, first precursor of the small eukaryotic ribosomal subunit (By similarity). During the assembly of the SSU processome in the nucleolus, many ribosome biogenesis factors, an RNA chaperone and ribosomal proteins associate with the nascent pre-rRNA and work in concert to generate RNA folding, modifications, rearrangements and cleavage as well as targeted degradation of pre-ribosomal RNA by the RNA exosome (By similarity). Involved in neuronal-lineage cell proliferation (By similarity). Required for cell survival in the CNS through its role in rRNA synthesis and processing (PubMed:16531401).</text>
</comment>
<comment type="subunit">
    <text evidence="1">Part of the small subunit (SSU) processome, composed of more than 70 proteins and the RNA chaperone small nucleolar RNA (snoRNA) U3. Interacts with MYC; the interaction is required for localization of MYC to the nucleolus.</text>
</comment>
<comment type="subcellular location">
    <subcellularLocation>
        <location evidence="1">Nucleus</location>
        <location evidence="1">Nucleolus</location>
    </subcellularLocation>
</comment>
<comment type="disruption phenotype">
    <text evidence="3">Abnormalities in the brain starting at midsomitogenesis stages.</text>
</comment>
<comment type="similarity">
    <text evidence="4">Belongs to the HEATR1/UTP10 family.</text>
</comment>
<organism>
    <name type="scientific">Danio rerio</name>
    <name type="common">Zebrafish</name>
    <name type="synonym">Brachydanio rerio</name>
    <dbReference type="NCBI Taxonomy" id="7955"/>
    <lineage>
        <taxon>Eukaryota</taxon>
        <taxon>Metazoa</taxon>
        <taxon>Chordata</taxon>
        <taxon>Craniata</taxon>
        <taxon>Vertebrata</taxon>
        <taxon>Euteleostomi</taxon>
        <taxon>Actinopterygii</taxon>
        <taxon>Neopterygii</taxon>
        <taxon>Teleostei</taxon>
        <taxon>Ostariophysi</taxon>
        <taxon>Cypriniformes</taxon>
        <taxon>Danionidae</taxon>
        <taxon>Danioninae</taxon>
        <taxon>Danio</taxon>
    </lineage>
</organism>
<reference key="1">
    <citation type="submission" date="2003-07" db="EMBL/GenBank/DDBJ databases">
        <authorList>
            <consortium name="NIH - Zebrafish Gene Collection (ZGC) project"/>
        </authorList>
    </citation>
    <scope>NUCLEOTIDE SEQUENCE [LARGE SCALE MRNA]</scope>
    <source>
        <strain>AB</strain>
    </source>
</reference>
<reference key="2">
    <citation type="journal article" date="2006" name="J. Biol. Chem.">
        <title>Perturbation of rRNA synthesis in the bap28 mutation leads to apoptosis mediated by p53 in the zebrafish central nervous system.</title>
        <authorList>
            <person name="Azuma M."/>
            <person name="Toyama R."/>
            <person name="Laver E."/>
            <person name="Dawid I.B."/>
        </authorList>
    </citation>
    <scope>FUNCTION</scope>
    <scope>DISRUPTION PHENOTYPE</scope>
</reference>
<protein>
    <recommendedName>
        <fullName>HEAT repeat-containing protein 1</fullName>
    </recommendedName>
    <alternativeName>
        <fullName>Protein BAP28</fullName>
    </alternativeName>
</protein>
<evidence type="ECO:0000250" key="1">
    <source>
        <dbReference type="UniProtKB" id="Q9H583"/>
    </source>
</evidence>
<evidence type="ECO:0000255" key="2"/>
<evidence type="ECO:0000269" key="3">
    <source>
    </source>
</evidence>
<evidence type="ECO:0000305" key="4"/>
<accession>Q7SY48</accession>
<keyword id="KW-0539">Nucleus</keyword>
<keyword id="KW-1185">Reference proteome</keyword>
<keyword id="KW-0677">Repeat</keyword>
<keyword id="KW-0687">Ribonucleoprotein</keyword>
<keyword id="KW-0690">Ribosome biogenesis</keyword>
<keyword id="KW-0698">rRNA processing</keyword>
<keyword id="KW-0804">Transcription</keyword>
<keyword id="KW-0805">Transcription regulation</keyword>
<feature type="chain" id="PRO_0000330921" description="HEAT repeat-containing protein 1">
    <location>
        <begin position="1"/>
        <end position="2159"/>
    </location>
</feature>
<feature type="repeat" description="HEAT 1" evidence="2">
    <location>
        <begin position="346"/>
        <end position="384"/>
    </location>
</feature>
<feature type="repeat" description="HEAT 2" evidence="2">
    <location>
        <begin position="509"/>
        <end position="548"/>
    </location>
</feature>
<feature type="repeat" description="HEAT 3" evidence="2">
    <location>
        <begin position="909"/>
        <end position="947"/>
    </location>
</feature>
<feature type="repeat" description="HEAT 4" evidence="2">
    <location>
        <begin position="1024"/>
        <end position="1062"/>
    </location>
</feature>
<feature type="repeat" description="HEAT 5" evidence="2">
    <location>
        <begin position="1219"/>
        <end position="1260"/>
    </location>
</feature>
<feature type="repeat" description="HEAT 6" evidence="2">
    <location>
        <begin position="1594"/>
        <end position="1632"/>
    </location>
</feature>
<feature type="repeat" description="HEAT 7" evidence="2">
    <location>
        <begin position="1733"/>
        <end position="1773"/>
    </location>
</feature>
<feature type="repeat" description="HEAT 8" evidence="2">
    <location>
        <begin position="2115"/>
        <end position="2153"/>
    </location>
</feature>
<sequence length="2159" mass="242050">MTSLAHQLKRLALPQNDSSLLGRKEVVSVLFDPKDAASMDRSTFHALGCTGLEELMGIDAAFSEFQETLFSQGSLTLERSVQSKEVNKKLDKSISLFLTRLSPYFLLKPALKCIEWLLHRFHIHLYNQDSLIACVLPYHETKVFVRVIQLFKIEDPTHKWHWLHGIQKPGVPLARGTLLTHCYKDLGFMDFVCSMVTNSVKAYSELTRDGNCPQLRVIFSFYASTIVSALDAVEKITNSIIAKLLPFVQLGLKSNLSDYTAATYMIVCQMAVKVVMEAQLVDSLSVQLSRSLGRTPQLIREGLSCIIILLQNQKKGVIGQKTYGYLCAVPTLVSTLQSISTVHDISPLLSYLLPHLIHSVMTQNDEQQNEGLSDSTGLLQSVFQNLQLSSNLENTAAKLLLEEYVVCGNELPSDGISALNQRIQPTVRLFESRYPCALDMALENHVKNVSSDNEKNLLHQFISLTLSCGKYQILPESETSLMLSLNHPLPSVRNMAVDYLKEILNSEHNSFDEAFLKDALLERIKDDSPEVVLSALKALQHHMGLMDVEDTVSSLISLLHRIKPSADWCPVLKEAVRVLDDPRIIEGNPDLKAYISWELLPFLVMTRAAPECVELQMTSAITETTLISQHPLTQGWAKVLKAVLAKTSESDLLGVANEMLTTTLIKNLANMDHATKRNTLENVCDILSRQGSSVRDRAAFVVFSSALLQSLQSMTESQHLHTAQSVYKLLEPLLLQAYTIQPEQVSDQPADECLPVCVALGEFLQKISCGLSAEQEQGLLLLSLLRLFITTLKCPDSTFKGEPWWNPEKMETTTCCYLRLLCRLFDVVISGASQGPLAPCFRSLMQPLLQVHLNEPMVLFKFLSLSWGYNSNLGDQLDCRVSAILQTQALYVGKAFLSSQPVKTLNLLASDSSPVVPSLLVCVCSGVCEVRRAAIAVLQCLSGLVSSPYHPLVEKLLKSSEEIIADSSYLTQALSKFYEEAVSRKDKNKKLASVEQLLQCLQSPFCPSYTSKTLLRALQDVHGEPVLSVLLPAVERLLEQCAPDSCTFLPDEALLLQLLLSKFSEMSAPLLVKDPRCLEVFIRALHTSARPYPTIPSFQITALEQITKPFFTAIGDEKIQQKILSILFDLLVGNKSPACAQSINSVFKTIAVDCELVANELIPADKQRVTATVQQTRRSKMRKTQDTSGAVPEESVVSWPRVTLILELLQHKKKLKRAQYLVPALFNLLSRCLEPAAAEQENIEYTKQLILICLLNVCQKLSPEGGPISKDVLEEDKFNMELVVQCVRVSEMPQTHHHALLLLGALAGIFPEKVLHNIMPIFTFMGANIMRLDDTYSFQVINKTVQAVIPALIKAHEGGSSQSEGHMETVVAQIIHVFVDALPHVPEHRRLPILSQLMSTLGPSRFLWVLMLLLFKQHVTQTSAGATGAEKEAVVERDQDFWILVCCEFEVKEQLTSLIKILQYLMTLPQDREEAPEKKKPRGRSAVKKDETVSDLIFSVETHSGKDLRHFKFISISFMAQLLASDGFVGKVADCEDITESTLQALQQDLLVEVLRYIQAVARCVEDNADKPTAKFWRALLSKSYDTLDKVNALLPMDTFITVMRGLVGNQLASVRRKAMELLNNKLQQRTKWLKEQITALLELIGTLLSIVGRSHRQVTAQEEEELAINRQTALYSLKLLCRNFGSDHKEEFVPVLNKAVELVADKDEEKNVMGSALLCVAEVTSTLKALAIPQLHRLMPAVLDTLKERKDLLNNEIYLLSAVTALQRASETLPHFISPYLLDTILQVTRLTLLARRLTSCPQLSVRLASLSSTLATKLPPRVLIPTITKCYCSMVDAQQNRLSPLMNILKEHISHMDKDQLNNHQSELTSFFLSALDFRAQHCQGDLKKTAEIEGCVIDCLLVMIMKLSEVTFRPLFFKLFDWSKIDGASKDRLLTFYRLADRIADKLKGLFVLFAGQLVKPFSDLLHQLNISHTDKAFFDSEDESDDDSDEEADDNVTKSSLLLQYVLDCLHKIFLYDTQHFLSKERADALLCPLVDQLENMLGGEETYKSRITTHLVPCIAQFAVAMRDDSQWKVLNYQILLKTRHSSPKVRFSALVMLLELAGKLRENYMVLLPETIPFLAELMEDECEEVEHQVQKVIQEMETILGEPLQSYF</sequence>
<gene>
    <name type="primary">heatr1</name>
    <name type="ORF">zgc:63510</name>
</gene>
<name>HEAT1_DANRE</name>